<organism>
    <name type="scientific">Leptothrix cholodnii (strain ATCC 51168 / LMG 8142 / SP-6)</name>
    <name type="common">Leptothrix discophora (strain SP-6)</name>
    <dbReference type="NCBI Taxonomy" id="395495"/>
    <lineage>
        <taxon>Bacteria</taxon>
        <taxon>Pseudomonadati</taxon>
        <taxon>Pseudomonadota</taxon>
        <taxon>Betaproteobacteria</taxon>
        <taxon>Burkholderiales</taxon>
        <taxon>Sphaerotilaceae</taxon>
        <taxon>Leptothrix</taxon>
    </lineage>
</organism>
<evidence type="ECO:0000255" key="1">
    <source>
        <dbReference type="HAMAP-Rule" id="MF_01261"/>
    </source>
</evidence>
<comment type="function">
    <text evidence="1">Catalyzes the addition and repair of the essential 3'-terminal CCA sequence in tRNAs without using a nucleic acid template. Adds these three nucleotides in the order of C, C, and A to the tRNA nucleotide-73, using CTP and ATP as substrates and producing inorganic pyrophosphate. tRNA 3'-terminal CCA addition is required both for tRNA processing and repair. Also involved in tRNA surveillance by mediating tandem CCA addition to generate a CCACCA at the 3' terminus of unstable tRNAs. While stable tRNAs receive only 3'-terminal CCA, unstable tRNAs are marked with CCACCA and rapidly degraded.</text>
</comment>
<comment type="catalytic activity">
    <reaction evidence="1">
        <text>a tRNA precursor + 2 CTP + ATP = a tRNA with a 3' CCA end + 3 diphosphate</text>
        <dbReference type="Rhea" id="RHEA:14433"/>
        <dbReference type="Rhea" id="RHEA-COMP:10465"/>
        <dbReference type="Rhea" id="RHEA-COMP:10468"/>
        <dbReference type="ChEBI" id="CHEBI:30616"/>
        <dbReference type="ChEBI" id="CHEBI:33019"/>
        <dbReference type="ChEBI" id="CHEBI:37563"/>
        <dbReference type="ChEBI" id="CHEBI:74896"/>
        <dbReference type="ChEBI" id="CHEBI:83071"/>
        <dbReference type="EC" id="2.7.7.72"/>
    </reaction>
</comment>
<comment type="catalytic activity">
    <reaction evidence="1">
        <text>a tRNA with a 3' CCA end + 2 CTP + ATP = a tRNA with a 3' CCACCA end + 3 diphosphate</text>
        <dbReference type="Rhea" id="RHEA:76235"/>
        <dbReference type="Rhea" id="RHEA-COMP:10468"/>
        <dbReference type="Rhea" id="RHEA-COMP:18655"/>
        <dbReference type="ChEBI" id="CHEBI:30616"/>
        <dbReference type="ChEBI" id="CHEBI:33019"/>
        <dbReference type="ChEBI" id="CHEBI:37563"/>
        <dbReference type="ChEBI" id="CHEBI:83071"/>
        <dbReference type="ChEBI" id="CHEBI:195187"/>
    </reaction>
    <physiologicalReaction direction="left-to-right" evidence="1">
        <dbReference type="Rhea" id="RHEA:76236"/>
    </physiologicalReaction>
</comment>
<comment type="cofactor">
    <cofactor evidence="1">
        <name>Mg(2+)</name>
        <dbReference type="ChEBI" id="CHEBI:18420"/>
    </cofactor>
    <text evidence="1">Magnesium is required for nucleotidyltransferase activity.</text>
</comment>
<comment type="cofactor">
    <cofactor evidence="1">
        <name>Ni(2+)</name>
        <dbReference type="ChEBI" id="CHEBI:49786"/>
    </cofactor>
    <text evidence="1">Nickel for phosphatase activity.</text>
</comment>
<comment type="subunit">
    <text evidence="1">Monomer. Can also form homodimers and oligomers.</text>
</comment>
<comment type="domain">
    <text evidence="1">Comprises two domains: an N-terminal domain containing the nucleotidyltransferase activity and a C-terminal HD domain associated with both phosphodiesterase and phosphatase activities.</text>
</comment>
<comment type="miscellaneous">
    <text evidence="1">A single active site specifically recognizes both ATP and CTP and is responsible for their addition.</text>
</comment>
<comment type="similarity">
    <text evidence="1">Belongs to the tRNA nucleotidyltransferase/poly(A) polymerase family. Bacterial CCA-adding enzyme type 1 subfamily.</text>
</comment>
<name>CCA_LEPCP</name>
<protein>
    <recommendedName>
        <fullName evidence="1">Multifunctional CCA protein</fullName>
    </recommendedName>
    <domain>
        <recommendedName>
            <fullName evidence="1">CCA-adding enzyme</fullName>
            <ecNumber evidence="1">2.7.7.72</ecNumber>
        </recommendedName>
        <alternativeName>
            <fullName evidence="1">CCA tRNA nucleotidyltransferase</fullName>
        </alternativeName>
        <alternativeName>
            <fullName evidence="1">tRNA CCA-pyrophosphorylase</fullName>
        </alternativeName>
        <alternativeName>
            <fullName evidence="1">tRNA adenylyl-/cytidylyl-transferase</fullName>
        </alternativeName>
        <alternativeName>
            <fullName evidence="1">tRNA nucleotidyltransferase</fullName>
        </alternativeName>
        <alternativeName>
            <fullName evidence="1">tRNA-NT</fullName>
        </alternativeName>
    </domain>
    <domain>
        <recommendedName>
            <fullName evidence="1">2'-nucleotidase</fullName>
            <ecNumber evidence="1">3.1.3.-</ecNumber>
        </recommendedName>
    </domain>
    <domain>
        <recommendedName>
            <fullName evidence="1">2',3'-cyclic phosphodiesterase</fullName>
            <ecNumber evidence="1">3.1.4.-</ecNumber>
        </recommendedName>
    </domain>
    <domain>
        <recommendedName>
            <fullName evidence="1">Phosphatase</fullName>
            <ecNumber evidence="1">3.1.3.-</ecNumber>
        </recommendedName>
    </domain>
</protein>
<proteinExistence type="inferred from homology"/>
<reference key="1">
    <citation type="submission" date="2008-03" db="EMBL/GenBank/DDBJ databases">
        <title>Complete sequence of Leptothrix cholodnii SP-6.</title>
        <authorList>
            <consortium name="US DOE Joint Genome Institute"/>
            <person name="Copeland A."/>
            <person name="Lucas S."/>
            <person name="Lapidus A."/>
            <person name="Glavina del Rio T."/>
            <person name="Dalin E."/>
            <person name="Tice H."/>
            <person name="Bruce D."/>
            <person name="Goodwin L."/>
            <person name="Pitluck S."/>
            <person name="Chertkov O."/>
            <person name="Brettin T."/>
            <person name="Detter J.C."/>
            <person name="Han C."/>
            <person name="Kuske C.R."/>
            <person name="Schmutz J."/>
            <person name="Larimer F."/>
            <person name="Land M."/>
            <person name="Hauser L."/>
            <person name="Kyrpides N."/>
            <person name="Lykidis A."/>
            <person name="Emerson D."/>
            <person name="Richardson P."/>
        </authorList>
    </citation>
    <scope>NUCLEOTIDE SEQUENCE [LARGE SCALE GENOMIC DNA]</scope>
    <source>
        <strain>ATCC 51168 / LMG 8142 / SP-6</strain>
    </source>
</reference>
<dbReference type="EC" id="2.7.7.72" evidence="1"/>
<dbReference type="EC" id="3.1.3.-" evidence="1"/>
<dbReference type="EC" id="3.1.4.-" evidence="1"/>
<dbReference type="EMBL" id="CP001013">
    <property type="protein sequence ID" value="ACB32381.1"/>
    <property type="molecule type" value="Genomic_DNA"/>
</dbReference>
<dbReference type="RefSeq" id="WP_012345143.1">
    <property type="nucleotide sequence ID" value="NC_010524.1"/>
</dbReference>
<dbReference type="SMR" id="B1Y634"/>
<dbReference type="STRING" id="395495.Lcho_0106"/>
<dbReference type="KEGG" id="lch:Lcho_0106"/>
<dbReference type="eggNOG" id="COG0617">
    <property type="taxonomic scope" value="Bacteria"/>
</dbReference>
<dbReference type="HOGENOM" id="CLU_015961_1_1_4"/>
<dbReference type="OrthoDB" id="9805698at2"/>
<dbReference type="Proteomes" id="UP000001693">
    <property type="component" value="Chromosome"/>
</dbReference>
<dbReference type="GO" id="GO:0005524">
    <property type="term" value="F:ATP binding"/>
    <property type="evidence" value="ECO:0007669"/>
    <property type="project" value="UniProtKB-UniRule"/>
</dbReference>
<dbReference type="GO" id="GO:0004810">
    <property type="term" value="F:CCA tRNA nucleotidyltransferase activity"/>
    <property type="evidence" value="ECO:0007669"/>
    <property type="project" value="UniProtKB-UniRule"/>
</dbReference>
<dbReference type="GO" id="GO:0004112">
    <property type="term" value="F:cyclic-nucleotide phosphodiesterase activity"/>
    <property type="evidence" value="ECO:0007669"/>
    <property type="project" value="UniProtKB-UniRule"/>
</dbReference>
<dbReference type="GO" id="GO:0000287">
    <property type="term" value="F:magnesium ion binding"/>
    <property type="evidence" value="ECO:0007669"/>
    <property type="project" value="UniProtKB-UniRule"/>
</dbReference>
<dbReference type="GO" id="GO:0016791">
    <property type="term" value="F:phosphatase activity"/>
    <property type="evidence" value="ECO:0007669"/>
    <property type="project" value="UniProtKB-UniRule"/>
</dbReference>
<dbReference type="GO" id="GO:0000049">
    <property type="term" value="F:tRNA binding"/>
    <property type="evidence" value="ECO:0007669"/>
    <property type="project" value="UniProtKB-UniRule"/>
</dbReference>
<dbReference type="GO" id="GO:0042245">
    <property type="term" value="P:RNA repair"/>
    <property type="evidence" value="ECO:0007669"/>
    <property type="project" value="UniProtKB-KW"/>
</dbReference>
<dbReference type="GO" id="GO:0001680">
    <property type="term" value="P:tRNA 3'-terminal CCA addition"/>
    <property type="evidence" value="ECO:0007669"/>
    <property type="project" value="UniProtKB-UniRule"/>
</dbReference>
<dbReference type="CDD" id="cd00077">
    <property type="entry name" value="HDc"/>
    <property type="match status" value="1"/>
</dbReference>
<dbReference type="CDD" id="cd05398">
    <property type="entry name" value="NT_ClassII-CCAase"/>
    <property type="match status" value="1"/>
</dbReference>
<dbReference type="Gene3D" id="3.30.460.10">
    <property type="entry name" value="Beta Polymerase, domain 2"/>
    <property type="match status" value="1"/>
</dbReference>
<dbReference type="Gene3D" id="1.10.3090.10">
    <property type="entry name" value="cca-adding enzyme, domain 2"/>
    <property type="match status" value="1"/>
</dbReference>
<dbReference type="HAMAP" id="MF_01261">
    <property type="entry name" value="CCA_bact_type1"/>
    <property type="match status" value="1"/>
</dbReference>
<dbReference type="InterPro" id="IPR012006">
    <property type="entry name" value="CCA_bact"/>
</dbReference>
<dbReference type="InterPro" id="IPR003607">
    <property type="entry name" value="HD/PDEase_dom"/>
</dbReference>
<dbReference type="InterPro" id="IPR006674">
    <property type="entry name" value="HD_domain"/>
</dbReference>
<dbReference type="InterPro" id="IPR043519">
    <property type="entry name" value="NT_sf"/>
</dbReference>
<dbReference type="InterPro" id="IPR002646">
    <property type="entry name" value="PolA_pol_head_dom"/>
</dbReference>
<dbReference type="InterPro" id="IPR032828">
    <property type="entry name" value="PolyA_RNA-bd"/>
</dbReference>
<dbReference type="InterPro" id="IPR050124">
    <property type="entry name" value="tRNA_CCA-adding_enzyme"/>
</dbReference>
<dbReference type="NCBIfam" id="NF008137">
    <property type="entry name" value="PRK10885.1"/>
    <property type="match status" value="1"/>
</dbReference>
<dbReference type="PANTHER" id="PTHR47545">
    <property type="entry name" value="MULTIFUNCTIONAL CCA PROTEIN"/>
    <property type="match status" value="1"/>
</dbReference>
<dbReference type="PANTHER" id="PTHR47545:SF1">
    <property type="entry name" value="MULTIFUNCTIONAL CCA PROTEIN"/>
    <property type="match status" value="1"/>
</dbReference>
<dbReference type="Pfam" id="PF01966">
    <property type="entry name" value="HD"/>
    <property type="match status" value="1"/>
</dbReference>
<dbReference type="Pfam" id="PF01743">
    <property type="entry name" value="PolyA_pol"/>
    <property type="match status" value="1"/>
</dbReference>
<dbReference type="Pfam" id="PF12627">
    <property type="entry name" value="PolyA_pol_RNAbd"/>
    <property type="match status" value="1"/>
</dbReference>
<dbReference type="PIRSF" id="PIRSF000813">
    <property type="entry name" value="CCA_bact"/>
    <property type="match status" value="1"/>
</dbReference>
<dbReference type="SUPFAM" id="SSF81301">
    <property type="entry name" value="Nucleotidyltransferase"/>
    <property type="match status" value="1"/>
</dbReference>
<dbReference type="SUPFAM" id="SSF81891">
    <property type="entry name" value="Poly A polymerase C-terminal region-like"/>
    <property type="match status" value="1"/>
</dbReference>
<dbReference type="PROSITE" id="PS51831">
    <property type="entry name" value="HD"/>
    <property type="match status" value="1"/>
</dbReference>
<feature type="chain" id="PRO_1000140041" description="Multifunctional CCA protein">
    <location>
        <begin position="1"/>
        <end position="419"/>
    </location>
</feature>
<feature type="domain" description="HD" evidence="1">
    <location>
        <begin position="226"/>
        <end position="327"/>
    </location>
</feature>
<feature type="binding site" evidence="1">
    <location>
        <position position="8"/>
    </location>
    <ligand>
        <name>ATP</name>
        <dbReference type="ChEBI" id="CHEBI:30616"/>
    </ligand>
</feature>
<feature type="binding site" evidence="1">
    <location>
        <position position="8"/>
    </location>
    <ligand>
        <name>CTP</name>
        <dbReference type="ChEBI" id="CHEBI:37563"/>
    </ligand>
</feature>
<feature type="binding site" evidence="1">
    <location>
        <position position="11"/>
    </location>
    <ligand>
        <name>ATP</name>
        <dbReference type="ChEBI" id="CHEBI:30616"/>
    </ligand>
</feature>
<feature type="binding site" evidence="1">
    <location>
        <position position="11"/>
    </location>
    <ligand>
        <name>CTP</name>
        <dbReference type="ChEBI" id="CHEBI:37563"/>
    </ligand>
</feature>
<feature type="binding site" evidence="1">
    <location>
        <position position="21"/>
    </location>
    <ligand>
        <name>Mg(2+)</name>
        <dbReference type="ChEBI" id="CHEBI:18420"/>
    </ligand>
</feature>
<feature type="binding site" evidence="1">
    <location>
        <position position="23"/>
    </location>
    <ligand>
        <name>Mg(2+)</name>
        <dbReference type="ChEBI" id="CHEBI:18420"/>
    </ligand>
</feature>
<feature type="binding site" evidence="1">
    <location>
        <position position="91"/>
    </location>
    <ligand>
        <name>ATP</name>
        <dbReference type="ChEBI" id="CHEBI:30616"/>
    </ligand>
</feature>
<feature type="binding site" evidence="1">
    <location>
        <position position="91"/>
    </location>
    <ligand>
        <name>CTP</name>
        <dbReference type="ChEBI" id="CHEBI:37563"/>
    </ligand>
</feature>
<feature type="binding site" evidence="1">
    <location>
        <position position="137"/>
    </location>
    <ligand>
        <name>ATP</name>
        <dbReference type="ChEBI" id="CHEBI:30616"/>
    </ligand>
</feature>
<feature type="binding site" evidence="1">
    <location>
        <position position="137"/>
    </location>
    <ligand>
        <name>CTP</name>
        <dbReference type="ChEBI" id="CHEBI:37563"/>
    </ligand>
</feature>
<feature type="binding site" evidence="1">
    <location>
        <position position="140"/>
    </location>
    <ligand>
        <name>ATP</name>
        <dbReference type="ChEBI" id="CHEBI:30616"/>
    </ligand>
</feature>
<feature type="binding site" evidence="1">
    <location>
        <position position="140"/>
    </location>
    <ligand>
        <name>CTP</name>
        <dbReference type="ChEBI" id="CHEBI:37563"/>
    </ligand>
</feature>
<sequence length="419" mass="45709">MRCLLVGGAVRDQLLGRPVGDRDWVVVGATPEQMVAAGYLPVGRDFPVFLHPRTHEEYALARTERKTAPGYHGFVFHTGADVSLDDDLARRDLTINAMALDEAGTLIDPWGGRRDLAHKCLRHVGAAFAEDPVRILRLARFAARLGDFSVAPETLALCRRMVEAGEVDALVPERVWQELSRGLMEARPSRMFEVLRDCGALARLLPEVERLFGVPQRADYHPEVDTGVHLMMVLDTAAQRGVSLPVRYACLGHDLGKGTTPAHILPRHIGHEGRSAALLAPMSARLKVPAACHELADLVAREHSNVHGSGNFDAAALVRLFDRCDAWRRPERFELALQACECDARGRLGFEQAHYPQAPRLRQALAAARGIDAAAVMASARARGLNGPALGRALHEARIEAVASDPACQRPADQAQQNG</sequence>
<keyword id="KW-0067">ATP-binding</keyword>
<keyword id="KW-0378">Hydrolase</keyword>
<keyword id="KW-0460">Magnesium</keyword>
<keyword id="KW-0479">Metal-binding</keyword>
<keyword id="KW-0511">Multifunctional enzyme</keyword>
<keyword id="KW-0533">Nickel</keyword>
<keyword id="KW-0547">Nucleotide-binding</keyword>
<keyword id="KW-0548">Nucleotidyltransferase</keyword>
<keyword id="KW-1185">Reference proteome</keyword>
<keyword id="KW-0692">RNA repair</keyword>
<keyword id="KW-0694">RNA-binding</keyword>
<keyword id="KW-0808">Transferase</keyword>
<keyword id="KW-0819">tRNA processing</keyword>
<accession>B1Y634</accession>
<gene>
    <name evidence="1" type="primary">cca</name>
    <name type="ordered locus">Lcho_0106</name>
</gene>